<sequence length="192" mass="20815">MYQDLIRNELNEAAETLANFLKDDANIHAIQRAAVLLADSFKAGGKVLSCGNGGSHCDAMHFAEELTGRYRENRPGYPAIAISDVSHISCVGNDFGFNDIFSRYVEAVGREGDVLLGISTSGNSANVIKAIAAAREKGMKVITLTGKDGGKMAGTADIEIRVPHFGYADRIQEIHIKVIHILIQLIEKEMVK</sequence>
<protein>
    <recommendedName>
        <fullName evidence="1">Phosphoheptose isomerase</fullName>
        <ecNumber evidence="1">5.3.1.28</ecNumber>
    </recommendedName>
    <alternativeName>
        <fullName evidence="1">Sedoheptulose 7-phosphate isomerase</fullName>
    </alternativeName>
</protein>
<name>GMHA_ECO45</name>
<reference key="1">
    <citation type="journal article" date="2009" name="PLoS Genet.">
        <title>Organised genome dynamics in the Escherichia coli species results in highly diverse adaptive paths.</title>
        <authorList>
            <person name="Touchon M."/>
            <person name="Hoede C."/>
            <person name="Tenaillon O."/>
            <person name="Barbe V."/>
            <person name="Baeriswyl S."/>
            <person name="Bidet P."/>
            <person name="Bingen E."/>
            <person name="Bonacorsi S."/>
            <person name="Bouchier C."/>
            <person name="Bouvet O."/>
            <person name="Calteau A."/>
            <person name="Chiapello H."/>
            <person name="Clermont O."/>
            <person name="Cruveiller S."/>
            <person name="Danchin A."/>
            <person name="Diard M."/>
            <person name="Dossat C."/>
            <person name="Karoui M.E."/>
            <person name="Frapy E."/>
            <person name="Garry L."/>
            <person name="Ghigo J.M."/>
            <person name="Gilles A.M."/>
            <person name="Johnson J."/>
            <person name="Le Bouguenec C."/>
            <person name="Lescat M."/>
            <person name="Mangenot S."/>
            <person name="Martinez-Jehanne V."/>
            <person name="Matic I."/>
            <person name="Nassif X."/>
            <person name="Oztas S."/>
            <person name="Petit M.A."/>
            <person name="Pichon C."/>
            <person name="Rouy Z."/>
            <person name="Ruf C.S."/>
            <person name="Schneider D."/>
            <person name="Tourret J."/>
            <person name="Vacherie B."/>
            <person name="Vallenet D."/>
            <person name="Medigue C."/>
            <person name="Rocha E.P.C."/>
            <person name="Denamur E."/>
        </authorList>
    </citation>
    <scope>NUCLEOTIDE SEQUENCE [LARGE SCALE GENOMIC DNA]</scope>
    <source>
        <strain>S88 / ExPEC</strain>
    </source>
</reference>
<gene>
    <name evidence="1" type="primary">gmhA</name>
    <name type="ordered locus">ECS88_0259</name>
</gene>
<feature type="chain" id="PRO_1000197001" description="Phosphoheptose isomerase">
    <location>
        <begin position="1"/>
        <end position="192"/>
    </location>
</feature>
<feature type="domain" description="SIS" evidence="1">
    <location>
        <begin position="37"/>
        <end position="192"/>
    </location>
</feature>
<feature type="binding site" evidence="1">
    <location>
        <begin position="52"/>
        <end position="54"/>
    </location>
    <ligand>
        <name>substrate</name>
    </ligand>
</feature>
<feature type="binding site" evidence="1">
    <location>
        <position position="61"/>
    </location>
    <ligand>
        <name>Zn(2+)</name>
        <dbReference type="ChEBI" id="CHEBI:29105"/>
    </ligand>
</feature>
<feature type="binding site" evidence="1">
    <location>
        <position position="65"/>
    </location>
    <ligand>
        <name>substrate</name>
    </ligand>
</feature>
<feature type="binding site" evidence="1">
    <location>
        <position position="65"/>
    </location>
    <ligand>
        <name>Zn(2+)</name>
        <dbReference type="ChEBI" id="CHEBI:29105"/>
    </ligand>
</feature>
<feature type="binding site" evidence="1">
    <location>
        <begin position="93"/>
        <end position="94"/>
    </location>
    <ligand>
        <name>substrate</name>
    </ligand>
</feature>
<feature type="binding site" evidence="1">
    <location>
        <begin position="119"/>
        <end position="121"/>
    </location>
    <ligand>
        <name>substrate</name>
    </ligand>
</feature>
<feature type="binding site" evidence="1">
    <location>
        <position position="124"/>
    </location>
    <ligand>
        <name>substrate</name>
    </ligand>
</feature>
<feature type="binding site" evidence="1">
    <location>
        <position position="172"/>
    </location>
    <ligand>
        <name>substrate</name>
    </ligand>
</feature>
<feature type="binding site" evidence="1">
    <location>
        <position position="172"/>
    </location>
    <ligand>
        <name>Zn(2+)</name>
        <dbReference type="ChEBI" id="CHEBI:29105"/>
    </ligand>
</feature>
<feature type="binding site" evidence="1">
    <location>
        <position position="180"/>
    </location>
    <ligand>
        <name>Zn(2+)</name>
        <dbReference type="ChEBI" id="CHEBI:29105"/>
    </ligand>
</feature>
<evidence type="ECO:0000255" key="1">
    <source>
        <dbReference type="HAMAP-Rule" id="MF_00067"/>
    </source>
</evidence>
<proteinExistence type="inferred from homology"/>
<organism>
    <name type="scientific">Escherichia coli O45:K1 (strain S88 / ExPEC)</name>
    <dbReference type="NCBI Taxonomy" id="585035"/>
    <lineage>
        <taxon>Bacteria</taxon>
        <taxon>Pseudomonadati</taxon>
        <taxon>Pseudomonadota</taxon>
        <taxon>Gammaproteobacteria</taxon>
        <taxon>Enterobacterales</taxon>
        <taxon>Enterobacteriaceae</taxon>
        <taxon>Escherichia</taxon>
    </lineage>
</organism>
<dbReference type="EC" id="5.3.1.28" evidence="1"/>
<dbReference type="EMBL" id="CU928161">
    <property type="protein sequence ID" value="CAR01614.1"/>
    <property type="molecule type" value="Genomic_DNA"/>
</dbReference>
<dbReference type="SMR" id="B7MC74"/>
<dbReference type="KEGG" id="ecz:ECS88_0259"/>
<dbReference type="HOGENOM" id="CLU_080999_4_0_6"/>
<dbReference type="UniPathway" id="UPA00041">
    <property type="reaction ID" value="UER00436"/>
</dbReference>
<dbReference type="Proteomes" id="UP000000747">
    <property type="component" value="Chromosome"/>
</dbReference>
<dbReference type="GO" id="GO:0005737">
    <property type="term" value="C:cytoplasm"/>
    <property type="evidence" value="ECO:0007669"/>
    <property type="project" value="UniProtKB-SubCell"/>
</dbReference>
<dbReference type="GO" id="GO:0097367">
    <property type="term" value="F:carbohydrate derivative binding"/>
    <property type="evidence" value="ECO:0007669"/>
    <property type="project" value="InterPro"/>
</dbReference>
<dbReference type="GO" id="GO:0008968">
    <property type="term" value="F:D-sedoheptulose 7-phosphate isomerase activity"/>
    <property type="evidence" value="ECO:0007669"/>
    <property type="project" value="UniProtKB-UniRule"/>
</dbReference>
<dbReference type="GO" id="GO:0008270">
    <property type="term" value="F:zinc ion binding"/>
    <property type="evidence" value="ECO:0007669"/>
    <property type="project" value="UniProtKB-UniRule"/>
</dbReference>
<dbReference type="GO" id="GO:0005975">
    <property type="term" value="P:carbohydrate metabolic process"/>
    <property type="evidence" value="ECO:0007669"/>
    <property type="project" value="UniProtKB-UniRule"/>
</dbReference>
<dbReference type="GO" id="GO:2001061">
    <property type="term" value="P:D-glycero-D-manno-heptose 7-phosphate biosynthetic process"/>
    <property type="evidence" value="ECO:0007669"/>
    <property type="project" value="UniProtKB-UniPathway"/>
</dbReference>
<dbReference type="CDD" id="cd05006">
    <property type="entry name" value="SIS_GmhA"/>
    <property type="match status" value="1"/>
</dbReference>
<dbReference type="FunFam" id="3.40.50.10490:FF:000013">
    <property type="entry name" value="Phosphoheptose isomerase"/>
    <property type="match status" value="1"/>
</dbReference>
<dbReference type="Gene3D" id="3.40.50.10490">
    <property type="entry name" value="Glucose-6-phosphate isomerase like protein, domain 1"/>
    <property type="match status" value="1"/>
</dbReference>
<dbReference type="HAMAP" id="MF_00067">
    <property type="entry name" value="GmhA"/>
    <property type="match status" value="1"/>
</dbReference>
<dbReference type="InterPro" id="IPR035461">
    <property type="entry name" value="GmhA/DiaA"/>
</dbReference>
<dbReference type="InterPro" id="IPR004515">
    <property type="entry name" value="Phosphoheptose_Isoase"/>
</dbReference>
<dbReference type="InterPro" id="IPR001347">
    <property type="entry name" value="SIS_dom"/>
</dbReference>
<dbReference type="InterPro" id="IPR046348">
    <property type="entry name" value="SIS_dom_sf"/>
</dbReference>
<dbReference type="InterPro" id="IPR050099">
    <property type="entry name" value="SIS_GmhA/DiaA_subfam"/>
</dbReference>
<dbReference type="NCBIfam" id="TIGR00441">
    <property type="entry name" value="gmhA"/>
    <property type="match status" value="1"/>
</dbReference>
<dbReference type="NCBIfam" id="NF001628">
    <property type="entry name" value="PRK00414.1"/>
    <property type="match status" value="1"/>
</dbReference>
<dbReference type="PANTHER" id="PTHR30390:SF7">
    <property type="entry name" value="PHOSPHOHEPTOSE ISOMERASE"/>
    <property type="match status" value="1"/>
</dbReference>
<dbReference type="PANTHER" id="PTHR30390">
    <property type="entry name" value="SEDOHEPTULOSE 7-PHOSPHATE ISOMERASE / DNAA INITIATOR-ASSOCIATING FACTOR FOR REPLICATION INITIATION"/>
    <property type="match status" value="1"/>
</dbReference>
<dbReference type="Pfam" id="PF13580">
    <property type="entry name" value="SIS_2"/>
    <property type="match status" value="1"/>
</dbReference>
<dbReference type="SUPFAM" id="SSF53697">
    <property type="entry name" value="SIS domain"/>
    <property type="match status" value="1"/>
</dbReference>
<dbReference type="PROSITE" id="PS51464">
    <property type="entry name" value="SIS"/>
    <property type="match status" value="1"/>
</dbReference>
<keyword id="KW-0119">Carbohydrate metabolism</keyword>
<keyword id="KW-0963">Cytoplasm</keyword>
<keyword id="KW-0413">Isomerase</keyword>
<keyword id="KW-0479">Metal-binding</keyword>
<keyword id="KW-1185">Reference proteome</keyword>
<keyword id="KW-0862">Zinc</keyword>
<accession>B7MC74</accession>
<comment type="function">
    <text evidence="1">Catalyzes the isomerization of sedoheptulose 7-phosphate in D-glycero-D-manno-heptose 7-phosphate.</text>
</comment>
<comment type="catalytic activity">
    <reaction evidence="1">
        <text>2 D-sedoheptulose 7-phosphate = D-glycero-alpha-D-manno-heptose 7-phosphate + D-glycero-beta-D-manno-heptose 7-phosphate</text>
        <dbReference type="Rhea" id="RHEA:27489"/>
        <dbReference type="ChEBI" id="CHEBI:57483"/>
        <dbReference type="ChEBI" id="CHEBI:60203"/>
        <dbReference type="ChEBI" id="CHEBI:60204"/>
        <dbReference type="EC" id="5.3.1.28"/>
    </reaction>
</comment>
<comment type="cofactor">
    <cofactor evidence="1">
        <name>Zn(2+)</name>
        <dbReference type="ChEBI" id="CHEBI:29105"/>
    </cofactor>
    <text evidence="1">Binds 1 zinc ion per subunit.</text>
</comment>
<comment type="pathway">
    <text evidence="1">Carbohydrate biosynthesis; D-glycero-D-manno-heptose 7-phosphate biosynthesis; D-glycero-alpha-D-manno-heptose 7-phosphate and D-glycero-beta-D-manno-heptose 7-phosphate from sedoheptulose 7-phosphate: step 1/1.</text>
</comment>
<comment type="subunit">
    <text evidence="1">Homotetramer.</text>
</comment>
<comment type="subcellular location">
    <subcellularLocation>
        <location evidence="1">Cytoplasm</location>
    </subcellularLocation>
</comment>
<comment type="miscellaneous">
    <text evidence="1">The reaction produces a racemic mixture of D-glycero-alpha-D-manno-heptose 7-phosphate and D-glycero-beta-D-manno-heptose 7-phosphate.</text>
</comment>
<comment type="similarity">
    <text evidence="1">Belongs to the SIS family. GmhA subfamily.</text>
</comment>